<dbReference type="EMBL" id="AM260525">
    <property type="protein sequence ID" value="CAK00715.1"/>
    <property type="molecule type" value="Genomic_DNA"/>
</dbReference>
<dbReference type="RefSeq" id="WP_012230632.1">
    <property type="nucleotide sequence ID" value="NC_010161.1"/>
</dbReference>
<dbReference type="SMR" id="A9IMT5"/>
<dbReference type="KEGG" id="btr:BT_0239"/>
<dbReference type="eggNOG" id="COG0532">
    <property type="taxonomic scope" value="Bacteria"/>
</dbReference>
<dbReference type="HOGENOM" id="CLU_006301_10_2_5"/>
<dbReference type="Proteomes" id="UP000001592">
    <property type="component" value="Chromosome"/>
</dbReference>
<dbReference type="GO" id="GO:0005829">
    <property type="term" value="C:cytosol"/>
    <property type="evidence" value="ECO:0007669"/>
    <property type="project" value="TreeGrafter"/>
</dbReference>
<dbReference type="GO" id="GO:0005525">
    <property type="term" value="F:GTP binding"/>
    <property type="evidence" value="ECO:0007669"/>
    <property type="project" value="UniProtKB-KW"/>
</dbReference>
<dbReference type="GO" id="GO:0003924">
    <property type="term" value="F:GTPase activity"/>
    <property type="evidence" value="ECO:0007669"/>
    <property type="project" value="UniProtKB-UniRule"/>
</dbReference>
<dbReference type="GO" id="GO:0097216">
    <property type="term" value="F:guanosine tetraphosphate binding"/>
    <property type="evidence" value="ECO:0007669"/>
    <property type="project" value="UniProtKB-ARBA"/>
</dbReference>
<dbReference type="GO" id="GO:0003743">
    <property type="term" value="F:translation initiation factor activity"/>
    <property type="evidence" value="ECO:0007669"/>
    <property type="project" value="UniProtKB-UniRule"/>
</dbReference>
<dbReference type="CDD" id="cd01887">
    <property type="entry name" value="IF2_eIF5B"/>
    <property type="match status" value="1"/>
</dbReference>
<dbReference type="CDD" id="cd03702">
    <property type="entry name" value="IF2_mtIF2_II"/>
    <property type="match status" value="1"/>
</dbReference>
<dbReference type="CDD" id="cd03692">
    <property type="entry name" value="mtIF2_IVc"/>
    <property type="match status" value="1"/>
</dbReference>
<dbReference type="FunFam" id="2.40.30.10:FF:000007">
    <property type="entry name" value="Translation initiation factor IF-2"/>
    <property type="match status" value="1"/>
</dbReference>
<dbReference type="FunFam" id="2.40.30.10:FF:000008">
    <property type="entry name" value="Translation initiation factor IF-2"/>
    <property type="match status" value="1"/>
</dbReference>
<dbReference type="FunFam" id="3.40.50.10050:FF:000001">
    <property type="entry name" value="Translation initiation factor IF-2"/>
    <property type="match status" value="1"/>
</dbReference>
<dbReference type="FunFam" id="3.40.50.300:FF:000019">
    <property type="entry name" value="Translation initiation factor IF-2"/>
    <property type="match status" value="1"/>
</dbReference>
<dbReference type="Gene3D" id="3.40.50.300">
    <property type="entry name" value="P-loop containing nucleotide triphosphate hydrolases"/>
    <property type="match status" value="1"/>
</dbReference>
<dbReference type="Gene3D" id="2.40.30.10">
    <property type="entry name" value="Translation factors"/>
    <property type="match status" value="2"/>
</dbReference>
<dbReference type="Gene3D" id="3.40.50.10050">
    <property type="entry name" value="Translation initiation factor IF- 2, domain 3"/>
    <property type="match status" value="1"/>
</dbReference>
<dbReference type="HAMAP" id="MF_00100_B">
    <property type="entry name" value="IF_2_B"/>
    <property type="match status" value="1"/>
</dbReference>
<dbReference type="InterPro" id="IPR053905">
    <property type="entry name" value="EF-G-like_DII"/>
</dbReference>
<dbReference type="InterPro" id="IPR004161">
    <property type="entry name" value="EFTu-like_2"/>
</dbReference>
<dbReference type="InterPro" id="IPR013575">
    <property type="entry name" value="IF2_assoc_dom_bac"/>
</dbReference>
<dbReference type="InterPro" id="IPR044145">
    <property type="entry name" value="IF2_II"/>
</dbReference>
<dbReference type="InterPro" id="IPR006847">
    <property type="entry name" value="IF2_N"/>
</dbReference>
<dbReference type="InterPro" id="IPR027417">
    <property type="entry name" value="P-loop_NTPase"/>
</dbReference>
<dbReference type="InterPro" id="IPR005225">
    <property type="entry name" value="Small_GTP-bd"/>
</dbReference>
<dbReference type="InterPro" id="IPR000795">
    <property type="entry name" value="T_Tr_GTP-bd_dom"/>
</dbReference>
<dbReference type="InterPro" id="IPR000178">
    <property type="entry name" value="TF_IF2_bacterial-like"/>
</dbReference>
<dbReference type="InterPro" id="IPR015760">
    <property type="entry name" value="TIF_IF2"/>
</dbReference>
<dbReference type="InterPro" id="IPR023115">
    <property type="entry name" value="TIF_IF2_dom3"/>
</dbReference>
<dbReference type="InterPro" id="IPR036925">
    <property type="entry name" value="TIF_IF2_dom3_sf"/>
</dbReference>
<dbReference type="InterPro" id="IPR009000">
    <property type="entry name" value="Transl_B-barrel_sf"/>
</dbReference>
<dbReference type="NCBIfam" id="TIGR00487">
    <property type="entry name" value="IF-2"/>
    <property type="match status" value="1"/>
</dbReference>
<dbReference type="NCBIfam" id="TIGR00231">
    <property type="entry name" value="small_GTP"/>
    <property type="match status" value="1"/>
</dbReference>
<dbReference type="PANTHER" id="PTHR43381:SF5">
    <property type="entry name" value="TR-TYPE G DOMAIN-CONTAINING PROTEIN"/>
    <property type="match status" value="1"/>
</dbReference>
<dbReference type="PANTHER" id="PTHR43381">
    <property type="entry name" value="TRANSLATION INITIATION FACTOR IF-2-RELATED"/>
    <property type="match status" value="1"/>
</dbReference>
<dbReference type="Pfam" id="PF22042">
    <property type="entry name" value="EF-G_D2"/>
    <property type="match status" value="1"/>
</dbReference>
<dbReference type="Pfam" id="PF00009">
    <property type="entry name" value="GTP_EFTU"/>
    <property type="match status" value="1"/>
</dbReference>
<dbReference type="Pfam" id="PF03144">
    <property type="entry name" value="GTP_EFTU_D2"/>
    <property type="match status" value="1"/>
</dbReference>
<dbReference type="Pfam" id="PF11987">
    <property type="entry name" value="IF-2"/>
    <property type="match status" value="1"/>
</dbReference>
<dbReference type="Pfam" id="PF08364">
    <property type="entry name" value="IF2_assoc"/>
    <property type="match status" value="1"/>
</dbReference>
<dbReference type="Pfam" id="PF04760">
    <property type="entry name" value="IF2_N"/>
    <property type="match status" value="1"/>
</dbReference>
<dbReference type="SUPFAM" id="SSF52156">
    <property type="entry name" value="Initiation factor IF2/eIF5b, domain 3"/>
    <property type="match status" value="1"/>
</dbReference>
<dbReference type="SUPFAM" id="SSF52540">
    <property type="entry name" value="P-loop containing nucleoside triphosphate hydrolases"/>
    <property type="match status" value="1"/>
</dbReference>
<dbReference type="SUPFAM" id="SSF50447">
    <property type="entry name" value="Translation proteins"/>
    <property type="match status" value="2"/>
</dbReference>
<dbReference type="PROSITE" id="PS51722">
    <property type="entry name" value="G_TR_2"/>
    <property type="match status" value="1"/>
</dbReference>
<dbReference type="PROSITE" id="PS01176">
    <property type="entry name" value="IF2"/>
    <property type="match status" value="1"/>
</dbReference>
<reference key="1">
    <citation type="journal article" date="2007" name="Nat. Genet.">
        <title>Genomic analysis of Bartonella identifies type IV secretion systems as host adaptability factors.</title>
        <authorList>
            <person name="Saenz H.L."/>
            <person name="Engel P."/>
            <person name="Stoeckli M.C."/>
            <person name="Lanz C."/>
            <person name="Raddatz G."/>
            <person name="Vayssier-Taussat M."/>
            <person name="Birtles R."/>
            <person name="Schuster S.C."/>
            <person name="Dehio C."/>
        </authorList>
    </citation>
    <scope>NUCLEOTIDE SEQUENCE [LARGE SCALE GENOMIC DNA]</scope>
    <source>
        <strain>CIP 105476 / IBS 506</strain>
    </source>
</reference>
<sequence>MSENNNDKTTGKKTLTLKRSVLETSTVKQNFSHGRTKAVVVETKRRKITRPDEKAEPLQPITKPHVAPQRSKPRFEEKKPQEAMAKSNLSSAEMEARLRALEEAHIQEKITREQAEKEARLAKEREEILKQEIQEQEILQKQEEEKPTVPISSVSSDPSLIEKTDIPIVPKNTTVIEKRKIDENQEEERHSRRANPAKSEIRAPKIVKGADERRRGKLTLNSALDEEGSARGRSMAAMRRRQEKFKRAQNQEPREKISREVVLPETITIQELAQRMTERSVDVIKFLMKQGQMMKPGDVIDADVAELIAVEFGHTVKRVLESDVEEGIFNITDNPQNMQPRPPVVTIMGHVDHGKTSLLDAIRKANVVSGEAGGITQHIGAYQVEQNGQKITFIDTPGHAAFTAMRARGARVTDIAVLVVAADDSVMPQTIESINHAKAAGVPIIVAINKIDKPAANAQKVRTELLQHEVFVETMGGETLDVEVSAKTGQNLDKLLEAILLQAEMLDLKADPQRTAEGVVIEAKLDRGRGSVATVLVQKGTLHPSDIIVAGNEWGRVRALIDDHGRHVKEAVPSTPIEILGMQGTPQAGDRFAVVTHEAKAREISEYRQRLARDKAVARQTGSRGSLEQMMTKLQTTGVKEFSLIIKGDVQGSIEAIASALEKLGNDEVRARVVHSGAGGITESDISLAEASNSAVIGFNVRANKQARDFAKTQGIEIRYYNIIYDLVDDIKAAMSGLLSPEQRETFLGNAEILEVFNITKIGKVAGCRVTEGKIERGAGVRLIRDNIVIHEGKLKTLKRFKDEVNEVQSGQECGIAFENYEDMRAGDIIETFRIEHINRTL</sequence>
<feature type="chain" id="PRO_1000075593" description="Translation initiation factor IF-2">
    <location>
        <begin position="1"/>
        <end position="842"/>
    </location>
</feature>
<feature type="domain" description="tr-type G">
    <location>
        <begin position="340"/>
        <end position="509"/>
    </location>
</feature>
<feature type="region of interest" description="Disordered" evidence="3">
    <location>
        <begin position="42"/>
        <end position="91"/>
    </location>
</feature>
<feature type="region of interest" description="Disordered" evidence="3">
    <location>
        <begin position="139"/>
        <end position="253"/>
    </location>
</feature>
<feature type="region of interest" description="G1" evidence="1">
    <location>
        <begin position="349"/>
        <end position="356"/>
    </location>
</feature>
<feature type="region of interest" description="G2" evidence="1">
    <location>
        <begin position="374"/>
        <end position="378"/>
    </location>
</feature>
<feature type="region of interest" description="G3" evidence="1">
    <location>
        <begin position="395"/>
        <end position="398"/>
    </location>
</feature>
<feature type="region of interest" description="G4" evidence="1">
    <location>
        <begin position="449"/>
        <end position="452"/>
    </location>
</feature>
<feature type="region of interest" description="G5" evidence="1">
    <location>
        <begin position="485"/>
        <end position="487"/>
    </location>
</feature>
<feature type="compositionally biased region" description="Basic and acidic residues" evidence="3">
    <location>
        <begin position="176"/>
        <end position="190"/>
    </location>
</feature>
<feature type="compositionally biased region" description="Basic and acidic residues" evidence="3">
    <location>
        <begin position="199"/>
        <end position="214"/>
    </location>
</feature>
<feature type="binding site" evidence="2">
    <location>
        <begin position="349"/>
        <end position="356"/>
    </location>
    <ligand>
        <name>GTP</name>
        <dbReference type="ChEBI" id="CHEBI:37565"/>
    </ligand>
</feature>
<feature type="binding site" evidence="2">
    <location>
        <begin position="395"/>
        <end position="399"/>
    </location>
    <ligand>
        <name>GTP</name>
        <dbReference type="ChEBI" id="CHEBI:37565"/>
    </ligand>
</feature>
<feature type="binding site" evidence="2">
    <location>
        <begin position="449"/>
        <end position="452"/>
    </location>
    <ligand>
        <name>GTP</name>
        <dbReference type="ChEBI" id="CHEBI:37565"/>
    </ligand>
</feature>
<proteinExistence type="inferred from homology"/>
<name>IF2_BART1</name>
<accession>A9IMT5</accession>
<comment type="function">
    <text evidence="2">One of the essential components for the initiation of protein synthesis. Protects formylmethionyl-tRNA from spontaneous hydrolysis and promotes its binding to the 30S ribosomal subunits. Also involved in the hydrolysis of GTP during the formation of the 70S ribosomal complex.</text>
</comment>
<comment type="subcellular location">
    <subcellularLocation>
        <location evidence="2">Cytoplasm</location>
    </subcellularLocation>
</comment>
<comment type="similarity">
    <text evidence="2">Belongs to the TRAFAC class translation factor GTPase superfamily. Classic translation factor GTPase family. IF-2 subfamily.</text>
</comment>
<evidence type="ECO:0000250" key="1"/>
<evidence type="ECO:0000255" key="2">
    <source>
        <dbReference type="HAMAP-Rule" id="MF_00100"/>
    </source>
</evidence>
<evidence type="ECO:0000256" key="3">
    <source>
        <dbReference type="SAM" id="MobiDB-lite"/>
    </source>
</evidence>
<protein>
    <recommendedName>
        <fullName evidence="2">Translation initiation factor IF-2</fullName>
    </recommendedName>
</protein>
<gene>
    <name evidence="2" type="primary">infB</name>
    <name type="ordered locus">BT_0239</name>
</gene>
<keyword id="KW-0963">Cytoplasm</keyword>
<keyword id="KW-0342">GTP-binding</keyword>
<keyword id="KW-0396">Initiation factor</keyword>
<keyword id="KW-0547">Nucleotide-binding</keyword>
<keyword id="KW-0648">Protein biosynthesis</keyword>
<organism>
    <name type="scientific">Bartonella tribocorum (strain CIP 105476 / IBS 506)</name>
    <dbReference type="NCBI Taxonomy" id="382640"/>
    <lineage>
        <taxon>Bacteria</taxon>
        <taxon>Pseudomonadati</taxon>
        <taxon>Pseudomonadota</taxon>
        <taxon>Alphaproteobacteria</taxon>
        <taxon>Hyphomicrobiales</taxon>
        <taxon>Bartonellaceae</taxon>
        <taxon>Bartonella</taxon>
    </lineage>
</organism>